<gene>
    <name evidence="1" type="primary">rplX</name>
    <name evidence="1" type="synonym">rpl24</name>
    <name type="ordered locus">P9515_17291</name>
</gene>
<protein>
    <recommendedName>
        <fullName evidence="1">Large ribosomal subunit protein uL24</fullName>
    </recommendedName>
    <alternativeName>
        <fullName evidence="2">50S ribosomal protein L24</fullName>
    </alternativeName>
</protein>
<feature type="chain" id="PRO_0000355710" description="Large ribosomal subunit protein uL24">
    <location>
        <begin position="1"/>
        <end position="118"/>
    </location>
</feature>
<dbReference type="EMBL" id="CP000552">
    <property type="protein sequence ID" value="ABM72936.1"/>
    <property type="molecule type" value="Genomic_DNA"/>
</dbReference>
<dbReference type="RefSeq" id="WP_011821027.1">
    <property type="nucleotide sequence ID" value="NC_008817.1"/>
</dbReference>
<dbReference type="SMR" id="A2BYS5"/>
<dbReference type="STRING" id="167542.P9515_17291"/>
<dbReference type="GeneID" id="60200809"/>
<dbReference type="KEGG" id="pmc:P9515_17291"/>
<dbReference type="eggNOG" id="COG0198">
    <property type="taxonomic scope" value="Bacteria"/>
</dbReference>
<dbReference type="HOGENOM" id="CLU_093315_2_3_3"/>
<dbReference type="OrthoDB" id="9807419at2"/>
<dbReference type="Proteomes" id="UP000001589">
    <property type="component" value="Chromosome"/>
</dbReference>
<dbReference type="GO" id="GO:1990904">
    <property type="term" value="C:ribonucleoprotein complex"/>
    <property type="evidence" value="ECO:0007669"/>
    <property type="project" value="UniProtKB-KW"/>
</dbReference>
<dbReference type="GO" id="GO:0005840">
    <property type="term" value="C:ribosome"/>
    <property type="evidence" value="ECO:0007669"/>
    <property type="project" value="UniProtKB-KW"/>
</dbReference>
<dbReference type="GO" id="GO:0019843">
    <property type="term" value="F:rRNA binding"/>
    <property type="evidence" value="ECO:0007669"/>
    <property type="project" value="UniProtKB-UniRule"/>
</dbReference>
<dbReference type="GO" id="GO:0003735">
    <property type="term" value="F:structural constituent of ribosome"/>
    <property type="evidence" value="ECO:0007669"/>
    <property type="project" value="InterPro"/>
</dbReference>
<dbReference type="GO" id="GO:0006412">
    <property type="term" value="P:translation"/>
    <property type="evidence" value="ECO:0007669"/>
    <property type="project" value="UniProtKB-UniRule"/>
</dbReference>
<dbReference type="CDD" id="cd06089">
    <property type="entry name" value="KOW_RPL26"/>
    <property type="match status" value="1"/>
</dbReference>
<dbReference type="Gene3D" id="2.30.30.30">
    <property type="match status" value="1"/>
</dbReference>
<dbReference type="HAMAP" id="MF_01326_B">
    <property type="entry name" value="Ribosomal_uL24_B"/>
    <property type="match status" value="1"/>
</dbReference>
<dbReference type="InterPro" id="IPR005824">
    <property type="entry name" value="KOW"/>
</dbReference>
<dbReference type="InterPro" id="IPR014722">
    <property type="entry name" value="Rib_uL2_dom2"/>
</dbReference>
<dbReference type="InterPro" id="IPR003256">
    <property type="entry name" value="Ribosomal_uL24"/>
</dbReference>
<dbReference type="InterPro" id="IPR005825">
    <property type="entry name" value="Ribosomal_uL24_CS"/>
</dbReference>
<dbReference type="InterPro" id="IPR041988">
    <property type="entry name" value="Ribosomal_uL24_KOW"/>
</dbReference>
<dbReference type="InterPro" id="IPR008991">
    <property type="entry name" value="Translation_prot_SH3-like_sf"/>
</dbReference>
<dbReference type="NCBIfam" id="TIGR01079">
    <property type="entry name" value="rplX_bact"/>
    <property type="match status" value="1"/>
</dbReference>
<dbReference type="PANTHER" id="PTHR12903">
    <property type="entry name" value="MITOCHONDRIAL RIBOSOMAL PROTEIN L24"/>
    <property type="match status" value="1"/>
</dbReference>
<dbReference type="Pfam" id="PF00467">
    <property type="entry name" value="KOW"/>
    <property type="match status" value="1"/>
</dbReference>
<dbReference type="Pfam" id="PF17136">
    <property type="entry name" value="ribosomal_L24"/>
    <property type="match status" value="1"/>
</dbReference>
<dbReference type="SMART" id="SM00739">
    <property type="entry name" value="KOW"/>
    <property type="match status" value="1"/>
</dbReference>
<dbReference type="SUPFAM" id="SSF50104">
    <property type="entry name" value="Translation proteins SH3-like domain"/>
    <property type="match status" value="1"/>
</dbReference>
<dbReference type="PROSITE" id="PS01108">
    <property type="entry name" value="RIBOSOMAL_L24"/>
    <property type="match status" value="1"/>
</dbReference>
<reference key="1">
    <citation type="journal article" date="2007" name="PLoS Genet.">
        <title>Patterns and implications of gene gain and loss in the evolution of Prochlorococcus.</title>
        <authorList>
            <person name="Kettler G.C."/>
            <person name="Martiny A.C."/>
            <person name="Huang K."/>
            <person name="Zucker J."/>
            <person name="Coleman M.L."/>
            <person name="Rodrigue S."/>
            <person name="Chen F."/>
            <person name="Lapidus A."/>
            <person name="Ferriera S."/>
            <person name="Johnson J."/>
            <person name="Steglich C."/>
            <person name="Church G.M."/>
            <person name="Richardson P."/>
            <person name="Chisholm S.W."/>
        </authorList>
    </citation>
    <scope>NUCLEOTIDE SEQUENCE [LARGE SCALE GENOMIC DNA]</scope>
    <source>
        <strain>MIT 9515</strain>
    </source>
</reference>
<proteinExistence type="inferred from homology"/>
<accession>A2BYS5</accession>
<sequence length="118" mass="13389">MLDSIKQKKNSKRIKMRIKTGDLVKVINGKEKGKTGEVLKTIPLENRVVVKGINLRTKHVKPTQEGESGRILTEEASLHASNVMFFSKDKNIVSKIEFFIDKEGVKKRKLKKTGELID</sequence>
<comment type="function">
    <text evidence="1">One of two assembly initiator proteins, it binds directly to the 5'-end of the 23S rRNA, where it nucleates assembly of the 50S subunit.</text>
</comment>
<comment type="function">
    <text evidence="1">One of the proteins that surrounds the polypeptide exit tunnel on the outside of the subunit.</text>
</comment>
<comment type="subunit">
    <text evidence="1">Part of the 50S ribosomal subunit.</text>
</comment>
<comment type="similarity">
    <text evidence="1">Belongs to the universal ribosomal protein uL24 family.</text>
</comment>
<organism>
    <name type="scientific">Prochlorococcus marinus (strain MIT 9515)</name>
    <dbReference type="NCBI Taxonomy" id="167542"/>
    <lineage>
        <taxon>Bacteria</taxon>
        <taxon>Bacillati</taxon>
        <taxon>Cyanobacteriota</taxon>
        <taxon>Cyanophyceae</taxon>
        <taxon>Synechococcales</taxon>
        <taxon>Prochlorococcaceae</taxon>
        <taxon>Prochlorococcus</taxon>
    </lineage>
</organism>
<name>RL24_PROM5</name>
<evidence type="ECO:0000255" key="1">
    <source>
        <dbReference type="HAMAP-Rule" id="MF_01326"/>
    </source>
</evidence>
<evidence type="ECO:0000305" key="2"/>
<keyword id="KW-0687">Ribonucleoprotein</keyword>
<keyword id="KW-0689">Ribosomal protein</keyword>
<keyword id="KW-0694">RNA-binding</keyword>
<keyword id="KW-0699">rRNA-binding</keyword>